<name>TRPB_PYRAR</name>
<comment type="function">
    <text evidence="1">The beta subunit is responsible for the synthesis of L-tryptophan from indole and L-serine.</text>
</comment>
<comment type="catalytic activity">
    <reaction evidence="1">
        <text>(1S,2R)-1-C-(indol-3-yl)glycerol 3-phosphate + L-serine = D-glyceraldehyde 3-phosphate + L-tryptophan + H2O</text>
        <dbReference type="Rhea" id="RHEA:10532"/>
        <dbReference type="ChEBI" id="CHEBI:15377"/>
        <dbReference type="ChEBI" id="CHEBI:33384"/>
        <dbReference type="ChEBI" id="CHEBI:57912"/>
        <dbReference type="ChEBI" id="CHEBI:58866"/>
        <dbReference type="ChEBI" id="CHEBI:59776"/>
        <dbReference type="EC" id="4.2.1.20"/>
    </reaction>
</comment>
<comment type="cofactor">
    <cofactor evidence="1">
        <name>pyridoxal 5'-phosphate</name>
        <dbReference type="ChEBI" id="CHEBI:597326"/>
    </cofactor>
</comment>
<comment type="pathway">
    <text evidence="1">Amino-acid biosynthesis; L-tryptophan biosynthesis; L-tryptophan from chorismate: step 5/5.</text>
</comment>
<comment type="subunit">
    <text evidence="1">Tetramer of two alpha and two beta chains.</text>
</comment>
<comment type="similarity">
    <text evidence="1">Belongs to the TrpB family.</text>
</comment>
<reference key="1">
    <citation type="submission" date="2007-04" db="EMBL/GenBank/DDBJ databases">
        <title>Complete sequence of Pyrobaculum arsenaticum DSM 13514.</title>
        <authorList>
            <consortium name="US DOE Joint Genome Institute"/>
            <person name="Copeland A."/>
            <person name="Lucas S."/>
            <person name="Lapidus A."/>
            <person name="Barry K."/>
            <person name="Glavina del Rio T."/>
            <person name="Dalin E."/>
            <person name="Tice H."/>
            <person name="Pitluck S."/>
            <person name="Chain P."/>
            <person name="Malfatti S."/>
            <person name="Shin M."/>
            <person name="Vergez L."/>
            <person name="Schmutz J."/>
            <person name="Larimer F."/>
            <person name="Land M."/>
            <person name="Hauser L."/>
            <person name="Kyrpides N."/>
            <person name="Mikhailova N."/>
            <person name="Cozen A.E."/>
            <person name="Fitz-Gibbon S.T."/>
            <person name="House C.H."/>
            <person name="Saltikov C."/>
            <person name="Lowe T.M."/>
            <person name="Richardson P."/>
        </authorList>
    </citation>
    <scope>NUCLEOTIDE SEQUENCE [LARGE SCALE GENOMIC DNA]</scope>
    <source>
        <strain>ATCC 700994 / DSM 13514 / JCM 11321 / PZ6</strain>
    </source>
</reference>
<sequence length="409" mass="44560">MVDRWYNIAADLPAVLAPPKDPDEGESRIGLLTRILPSALIDQEFSAERWITVPEEVRDAYRRVGRPTPLLRAEGLERALGTGVRIYYKYEGVLPVGSHKLNTALAQAYYAKADGAVEVATETGAGQWGMAVSLAAALFGLKAVVFMTRSSYNSKRQRLTFMRTYGATVYPSPSEVTEAGRRHYRPDHPGSLGIAISEAVEYVLSGEKRHYLPGSVLEFVLMHQTVIGLEAVRQLPEEPDAAVACVGGGSNFAGFTYPMIGMKLRGEGFDKTRFVAVEAEAAPKLTKGEYKYDFPDAVGILPMIKMYTLGHDYVPPPVHAAGLRYHGAAPSLSLLRKLGIVEPLSYPQEEVMKAAVLFARTEGIVPAPESAHAIRAVLDLAKKLPRGSVIAFNLSGHGLLDSDAYEKFL</sequence>
<accession>A4WKQ9</accession>
<protein>
    <recommendedName>
        <fullName evidence="1">Tryptophan synthase beta chain</fullName>
        <ecNumber evidence="1">4.2.1.20</ecNumber>
    </recommendedName>
</protein>
<dbReference type="EC" id="4.2.1.20" evidence="1"/>
<dbReference type="EMBL" id="CP000660">
    <property type="protein sequence ID" value="ABP50976.1"/>
    <property type="molecule type" value="Genomic_DNA"/>
</dbReference>
<dbReference type="RefSeq" id="WP_011900883.1">
    <property type="nucleotide sequence ID" value="NC_009376.1"/>
</dbReference>
<dbReference type="SMR" id="A4WKQ9"/>
<dbReference type="STRING" id="340102.Pars_1418"/>
<dbReference type="GeneID" id="5056425"/>
<dbReference type="KEGG" id="pas:Pars_1418"/>
<dbReference type="HOGENOM" id="CLU_042858_1_0_2"/>
<dbReference type="OrthoDB" id="371827at2157"/>
<dbReference type="PhylomeDB" id="A4WKQ9"/>
<dbReference type="UniPathway" id="UPA00035">
    <property type="reaction ID" value="UER00044"/>
</dbReference>
<dbReference type="Proteomes" id="UP000001567">
    <property type="component" value="Chromosome"/>
</dbReference>
<dbReference type="GO" id="GO:0005737">
    <property type="term" value="C:cytoplasm"/>
    <property type="evidence" value="ECO:0007669"/>
    <property type="project" value="TreeGrafter"/>
</dbReference>
<dbReference type="GO" id="GO:0052684">
    <property type="term" value="F:L-serine hydro-lyase (adding indole, L-tryptophan-forming) activity"/>
    <property type="evidence" value="ECO:0007669"/>
    <property type="project" value="TreeGrafter"/>
</dbReference>
<dbReference type="GO" id="GO:0030170">
    <property type="term" value="F:pyridoxal phosphate binding"/>
    <property type="evidence" value="ECO:0007669"/>
    <property type="project" value="InterPro"/>
</dbReference>
<dbReference type="GO" id="GO:0004834">
    <property type="term" value="F:tryptophan synthase activity"/>
    <property type="evidence" value="ECO:0007669"/>
    <property type="project" value="UniProtKB-UniRule"/>
</dbReference>
<dbReference type="CDD" id="cd06446">
    <property type="entry name" value="Trp-synth_B"/>
    <property type="match status" value="1"/>
</dbReference>
<dbReference type="Gene3D" id="3.40.50.1100">
    <property type="match status" value="2"/>
</dbReference>
<dbReference type="HAMAP" id="MF_00133">
    <property type="entry name" value="Trp_synth_beta"/>
    <property type="match status" value="1"/>
</dbReference>
<dbReference type="InterPro" id="IPR006316">
    <property type="entry name" value="Trp_synth_b-like"/>
</dbReference>
<dbReference type="InterPro" id="IPR006653">
    <property type="entry name" value="Trp_synth_b_CS"/>
</dbReference>
<dbReference type="InterPro" id="IPR006654">
    <property type="entry name" value="Trp_synth_beta"/>
</dbReference>
<dbReference type="InterPro" id="IPR023026">
    <property type="entry name" value="Trp_synth_beta/beta-like"/>
</dbReference>
<dbReference type="InterPro" id="IPR001926">
    <property type="entry name" value="TrpB-like_PALP"/>
</dbReference>
<dbReference type="InterPro" id="IPR036052">
    <property type="entry name" value="TrpB-like_PALP_sf"/>
</dbReference>
<dbReference type="NCBIfam" id="NF009057">
    <property type="entry name" value="PRK12391.1"/>
    <property type="match status" value="1"/>
</dbReference>
<dbReference type="NCBIfam" id="TIGR01415">
    <property type="entry name" value="trpB_rel"/>
    <property type="match status" value="1"/>
</dbReference>
<dbReference type="PANTHER" id="PTHR48077:SF6">
    <property type="entry name" value="TRYPTOPHAN SYNTHASE"/>
    <property type="match status" value="1"/>
</dbReference>
<dbReference type="PANTHER" id="PTHR48077">
    <property type="entry name" value="TRYPTOPHAN SYNTHASE-RELATED"/>
    <property type="match status" value="1"/>
</dbReference>
<dbReference type="Pfam" id="PF00291">
    <property type="entry name" value="PALP"/>
    <property type="match status" value="1"/>
</dbReference>
<dbReference type="PIRSF" id="PIRSF001413">
    <property type="entry name" value="Trp_syn_beta"/>
    <property type="match status" value="1"/>
</dbReference>
<dbReference type="PIRSF" id="PIRSF500824">
    <property type="entry name" value="TrpB_prok"/>
    <property type="match status" value="1"/>
</dbReference>
<dbReference type="SUPFAM" id="SSF53686">
    <property type="entry name" value="Tryptophan synthase beta subunit-like PLP-dependent enzymes"/>
    <property type="match status" value="1"/>
</dbReference>
<dbReference type="PROSITE" id="PS00168">
    <property type="entry name" value="TRP_SYNTHASE_BETA"/>
    <property type="match status" value="1"/>
</dbReference>
<keyword id="KW-0028">Amino-acid biosynthesis</keyword>
<keyword id="KW-0057">Aromatic amino acid biosynthesis</keyword>
<keyword id="KW-0456">Lyase</keyword>
<keyword id="KW-0663">Pyridoxal phosphate</keyword>
<keyword id="KW-0822">Tryptophan biosynthesis</keyword>
<proteinExistence type="inferred from homology"/>
<organism>
    <name type="scientific">Pyrobaculum arsenaticum (strain DSM 13514 / JCM 11321 / PZ6)</name>
    <dbReference type="NCBI Taxonomy" id="340102"/>
    <lineage>
        <taxon>Archaea</taxon>
        <taxon>Thermoproteota</taxon>
        <taxon>Thermoprotei</taxon>
        <taxon>Thermoproteales</taxon>
        <taxon>Thermoproteaceae</taxon>
        <taxon>Pyrobaculum</taxon>
    </lineage>
</organism>
<gene>
    <name evidence="1" type="primary">trpB</name>
    <name type="ordered locus">Pars_1418</name>
</gene>
<feature type="chain" id="PRO_1000117761" description="Tryptophan synthase beta chain">
    <location>
        <begin position="1"/>
        <end position="409"/>
    </location>
</feature>
<feature type="modified residue" description="N6-(pyridoxal phosphate)lysine" evidence="1">
    <location>
        <position position="100"/>
    </location>
</feature>
<evidence type="ECO:0000255" key="1">
    <source>
        <dbReference type="HAMAP-Rule" id="MF_00133"/>
    </source>
</evidence>